<comment type="similarity">
    <text evidence="1">Belongs to the mimivirus L39/R874 family.</text>
</comment>
<keyword id="KW-1185">Reference proteome</keyword>
<protein>
    <recommendedName>
        <fullName>Uncharacterized protein R874</fullName>
    </recommendedName>
</protein>
<dbReference type="EMBL" id="AY653733">
    <property type="protein sequence ID" value="AAV51132.1"/>
    <property type="molecule type" value="Genomic_DNA"/>
</dbReference>
<dbReference type="KEGG" id="vg:9925541"/>
<dbReference type="OrthoDB" id="21101at10239"/>
<dbReference type="Proteomes" id="UP000001134">
    <property type="component" value="Genome"/>
</dbReference>
<name>YR874_MIMIV</name>
<organismHost>
    <name type="scientific">Acanthamoeba polyphaga</name>
    <name type="common">Amoeba</name>
    <dbReference type="NCBI Taxonomy" id="5757"/>
</organismHost>
<accession>Q5URB0</accession>
<reference key="1">
    <citation type="journal article" date="2004" name="Science">
        <title>The 1.2-megabase genome sequence of Mimivirus.</title>
        <authorList>
            <person name="Raoult D."/>
            <person name="Audic S."/>
            <person name="Robert C."/>
            <person name="Abergel C."/>
            <person name="Renesto P."/>
            <person name="Ogata H."/>
            <person name="La Scola B."/>
            <person name="Susan M."/>
            <person name="Claverie J.-M."/>
        </authorList>
    </citation>
    <scope>NUCLEOTIDE SEQUENCE [LARGE SCALE GENOMIC DNA]</scope>
    <source>
        <strain>Rowbotham-Bradford</strain>
    </source>
</reference>
<evidence type="ECO:0000305" key="1"/>
<proteinExistence type="inferred from homology"/>
<gene>
    <name type="ordered locus">MIMI_R874</name>
</gene>
<organism>
    <name type="scientific">Acanthamoeba polyphaga mimivirus</name>
    <name type="common">APMV</name>
    <dbReference type="NCBI Taxonomy" id="212035"/>
    <lineage>
        <taxon>Viruses</taxon>
        <taxon>Varidnaviria</taxon>
        <taxon>Bamfordvirae</taxon>
        <taxon>Nucleocytoviricota</taxon>
        <taxon>Megaviricetes</taxon>
        <taxon>Imitervirales</taxon>
        <taxon>Mimiviridae</taxon>
        <taxon>Megamimivirinae</taxon>
        <taxon>Mimivirus</taxon>
        <taxon>Mimivirus bradfordmassiliense</taxon>
    </lineage>
</organism>
<feature type="chain" id="PRO_0000071383" description="Uncharacterized protein R874">
    <location>
        <begin position="1"/>
        <end position="178"/>
    </location>
</feature>
<sequence length="178" mass="20898">MTSWLCASNMKFRINKFKIEKFQIDNSDIVGKIMGLDINTCDLLTKAVVVDHECEYYWDSKVCICGKDPLTKLKQLEKVECLDFSKIAQEITGGIISSESLRDMYDYISRMLYDSETFEFPLEWDFTFANRYILVPRSYENNSQIEMIKGFCFFADELPFIKPLIVKFFTEKNPTIVY</sequence>